<reference key="1">
    <citation type="journal article" date="2008" name="J. Bacteriol.">
        <title>Comparative genome analysis of 'Candidatus Phytoplasma australiense' (subgroup tuf-Australia I; rp-A) and 'Ca. Phytoplasma asteris' strains OY-M and AY-WB.</title>
        <authorList>
            <person name="Tran-Nguyen L.T."/>
            <person name="Kube M."/>
            <person name="Schneider B."/>
            <person name="Reinhardt R."/>
            <person name="Gibb K.S."/>
        </authorList>
    </citation>
    <scope>NUCLEOTIDE SEQUENCE [LARGE SCALE GENOMIC DNA]</scope>
</reference>
<accession>B1VAM4</accession>
<proteinExistence type="inferred from homology"/>
<gene>
    <name evidence="2" type="primary">rpsL</name>
    <name type="ordered locus">PA0663</name>
</gene>
<organism>
    <name type="scientific">Phytoplasma australiense</name>
    <dbReference type="NCBI Taxonomy" id="59748"/>
    <lineage>
        <taxon>Bacteria</taxon>
        <taxon>Bacillati</taxon>
        <taxon>Mycoplasmatota</taxon>
        <taxon>Mollicutes</taxon>
        <taxon>Acholeplasmatales</taxon>
        <taxon>Acholeplasmataceae</taxon>
        <taxon>Candidatus Phytoplasma</taxon>
        <taxon>16SrXII (Stolbur group)</taxon>
    </lineage>
</organism>
<dbReference type="EMBL" id="AM422018">
    <property type="protein sequence ID" value="CAM11997.1"/>
    <property type="molecule type" value="Genomic_DNA"/>
</dbReference>
<dbReference type="SMR" id="B1VAM4"/>
<dbReference type="STRING" id="59748.PA0663"/>
<dbReference type="KEGG" id="pal:PA0663"/>
<dbReference type="eggNOG" id="COG0048">
    <property type="taxonomic scope" value="Bacteria"/>
</dbReference>
<dbReference type="Proteomes" id="UP000008323">
    <property type="component" value="Chromosome"/>
</dbReference>
<dbReference type="GO" id="GO:0015935">
    <property type="term" value="C:small ribosomal subunit"/>
    <property type="evidence" value="ECO:0007669"/>
    <property type="project" value="InterPro"/>
</dbReference>
<dbReference type="GO" id="GO:0019843">
    <property type="term" value="F:rRNA binding"/>
    <property type="evidence" value="ECO:0007669"/>
    <property type="project" value="UniProtKB-UniRule"/>
</dbReference>
<dbReference type="GO" id="GO:0003735">
    <property type="term" value="F:structural constituent of ribosome"/>
    <property type="evidence" value="ECO:0007669"/>
    <property type="project" value="InterPro"/>
</dbReference>
<dbReference type="GO" id="GO:0000049">
    <property type="term" value="F:tRNA binding"/>
    <property type="evidence" value="ECO:0007669"/>
    <property type="project" value="UniProtKB-UniRule"/>
</dbReference>
<dbReference type="GO" id="GO:0006412">
    <property type="term" value="P:translation"/>
    <property type="evidence" value="ECO:0007669"/>
    <property type="project" value="UniProtKB-UniRule"/>
</dbReference>
<dbReference type="CDD" id="cd03368">
    <property type="entry name" value="Ribosomal_S12"/>
    <property type="match status" value="1"/>
</dbReference>
<dbReference type="FunFam" id="2.40.50.140:FF:000099">
    <property type="entry name" value="Ribosomal protein S12, mitochondrial"/>
    <property type="match status" value="1"/>
</dbReference>
<dbReference type="Gene3D" id="2.40.50.140">
    <property type="entry name" value="Nucleic acid-binding proteins"/>
    <property type="match status" value="1"/>
</dbReference>
<dbReference type="HAMAP" id="MF_00403_B">
    <property type="entry name" value="Ribosomal_uS12_B"/>
    <property type="match status" value="1"/>
</dbReference>
<dbReference type="InterPro" id="IPR012340">
    <property type="entry name" value="NA-bd_OB-fold"/>
</dbReference>
<dbReference type="InterPro" id="IPR006032">
    <property type="entry name" value="Ribosomal_uS12"/>
</dbReference>
<dbReference type="InterPro" id="IPR005679">
    <property type="entry name" value="Ribosomal_uS12_bac"/>
</dbReference>
<dbReference type="NCBIfam" id="TIGR00981">
    <property type="entry name" value="rpsL_bact"/>
    <property type="match status" value="1"/>
</dbReference>
<dbReference type="PANTHER" id="PTHR11652">
    <property type="entry name" value="30S RIBOSOMAL PROTEIN S12 FAMILY MEMBER"/>
    <property type="match status" value="1"/>
</dbReference>
<dbReference type="Pfam" id="PF00164">
    <property type="entry name" value="Ribosom_S12_S23"/>
    <property type="match status" value="1"/>
</dbReference>
<dbReference type="PIRSF" id="PIRSF002133">
    <property type="entry name" value="Ribosomal_S12/S23"/>
    <property type="match status" value="1"/>
</dbReference>
<dbReference type="PRINTS" id="PR01034">
    <property type="entry name" value="RIBOSOMALS12"/>
</dbReference>
<dbReference type="SUPFAM" id="SSF50249">
    <property type="entry name" value="Nucleic acid-binding proteins"/>
    <property type="match status" value="1"/>
</dbReference>
<dbReference type="PROSITE" id="PS00055">
    <property type="entry name" value="RIBOSOMAL_S12"/>
    <property type="match status" value="1"/>
</dbReference>
<evidence type="ECO:0000250" key="1"/>
<evidence type="ECO:0000255" key="2">
    <source>
        <dbReference type="HAMAP-Rule" id="MF_00403"/>
    </source>
</evidence>
<evidence type="ECO:0000305" key="3"/>
<keyword id="KW-0488">Methylation</keyword>
<keyword id="KW-1185">Reference proteome</keyword>
<keyword id="KW-0687">Ribonucleoprotein</keyword>
<keyword id="KW-0689">Ribosomal protein</keyword>
<keyword id="KW-0694">RNA-binding</keyword>
<keyword id="KW-0699">rRNA-binding</keyword>
<keyword id="KW-0820">tRNA-binding</keyword>
<comment type="function">
    <text evidence="2">With S4 and S5 plays an important role in translational accuracy.</text>
</comment>
<comment type="function">
    <text evidence="2">Interacts with and stabilizes bases of the 16S rRNA that are involved in tRNA selection in the A site and with the mRNA backbone. Located at the interface of the 30S and 50S subunits, it traverses the body of the 30S subunit contacting proteins on the other side and probably holding the rRNA structure together. The combined cluster of proteins S8, S12 and S17 appears to hold together the shoulder and platform of the 30S subunit.</text>
</comment>
<comment type="subunit">
    <text evidence="2">Part of the 30S ribosomal subunit. Contacts proteins S8 and S17. May interact with IF1 in the 30S initiation complex.</text>
</comment>
<comment type="similarity">
    <text evidence="2">Belongs to the universal ribosomal protein uS12 family.</text>
</comment>
<feature type="chain" id="PRO_1000194205" description="Small ribosomal subunit protein uS12">
    <location>
        <begin position="1"/>
        <end position="139"/>
    </location>
</feature>
<feature type="modified residue" description="3-methylthioaspartic acid" evidence="1">
    <location>
        <position position="102"/>
    </location>
</feature>
<name>RS12_PHYAS</name>
<protein>
    <recommendedName>
        <fullName evidence="2">Small ribosomal subunit protein uS12</fullName>
    </recommendedName>
    <alternativeName>
        <fullName evidence="3">30S ribosomal protein S12</fullName>
    </alternativeName>
</protein>
<sequence length="139" mass="15315">MPTVSQLIKKRRTSKTTKTKAPALSYGFNILKKKAQHYASPQKMGVCLRVTTMTPKKPNSALRKFARVRLSNGSEVTAYIPGVGHSLQEHSSVLICGGRVKDLPGVRYHIIRGTLDATGVANRKQGRSRYGAKRPKAQK</sequence>